<gene>
    <name evidence="1" type="primary">rplD</name>
    <name type="ordered locus">BUAP5A_516</name>
</gene>
<organism>
    <name type="scientific">Buchnera aphidicola subsp. Acyrthosiphon pisum (strain 5A)</name>
    <dbReference type="NCBI Taxonomy" id="563178"/>
    <lineage>
        <taxon>Bacteria</taxon>
        <taxon>Pseudomonadati</taxon>
        <taxon>Pseudomonadota</taxon>
        <taxon>Gammaproteobacteria</taxon>
        <taxon>Enterobacterales</taxon>
        <taxon>Erwiniaceae</taxon>
        <taxon>Buchnera</taxon>
    </lineage>
</organism>
<sequence>MELVVKDVQNVLSVSEIIFARDFNEALIHQVVIAYSASTRQGTRAQKSRAEVSGSGRKPWRQKGTGRARAGSFRSPIWRSGGVTFAAKPQEHSQKVNKKMYRGALKSIFSELIRQKRLIVFENFSLNAPKTKLLVQKLKDINLKNVLIVTNKIDNNLFLASRNLYSVDVKDVHSIDPVSLIAFDHVVITVEAVKRIEEILS</sequence>
<reference key="1">
    <citation type="journal article" date="2009" name="Science">
        <title>The dynamics and time scale of ongoing genomic erosion in symbiotic bacteria.</title>
        <authorList>
            <person name="Moran N.A."/>
            <person name="McLaughlin H.J."/>
            <person name="Sorek R."/>
        </authorList>
    </citation>
    <scope>NUCLEOTIDE SEQUENCE [LARGE SCALE GENOMIC DNA]</scope>
    <source>
        <strain>5A</strain>
    </source>
</reference>
<protein>
    <recommendedName>
        <fullName evidence="1">Large ribosomal subunit protein uL4</fullName>
    </recommendedName>
    <alternativeName>
        <fullName evidence="3">50S ribosomal protein L4</fullName>
    </alternativeName>
</protein>
<evidence type="ECO:0000255" key="1">
    <source>
        <dbReference type="HAMAP-Rule" id="MF_01328"/>
    </source>
</evidence>
<evidence type="ECO:0000256" key="2">
    <source>
        <dbReference type="SAM" id="MobiDB-lite"/>
    </source>
</evidence>
<evidence type="ECO:0000305" key="3"/>
<dbReference type="EMBL" id="CP001161">
    <property type="protein sequence ID" value="ACL30867.1"/>
    <property type="molecule type" value="Genomic_DNA"/>
</dbReference>
<dbReference type="RefSeq" id="WP_009874474.1">
    <property type="nucleotide sequence ID" value="NC_011833.1"/>
</dbReference>
<dbReference type="SMR" id="B8D9U6"/>
<dbReference type="KEGG" id="bap:BUAP5A_516"/>
<dbReference type="HOGENOM" id="CLU_041575_5_2_6"/>
<dbReference type="OrthoDB" id="9803201at2"/>
<dbReference type="Proteomes" id="UP000006904">
    <property type="component" value="Chromosome"/>
</dbReference>
<dbReference type="GO" id="GO:1990904">
    <property type="term" value="C:ribonucleoprotein complex"/>
    <property type="evidence" value="ECO:0007669"/>
    <property type="project" value="UniProtKB-KW"/>
</dbReference>
<dbReference type="GO" id="GO:0005840">
    <property type="term" value="C:ribosome"/>
    <property type="evidence" value="ECO:0007669"/>
    <property type="project" value="UniProtKB-KW"/>
</dbReference>
<dbReference type="GO" id="GO:0019843">
    <property type="term" value="F:rRNA binding"/>
    <property type="evidence" value="ECO:0007669"/>
    <property type="project" value="UniProtKB-UniRule"/>
</dbReference>
<dbReference type="GO" id="GO:0003735">
    <property type="term" value="F:structural constituent of ribosome"/>
    <property type="evidence" value="ECO:0007669"/>
    <property type="project" value="InterPro"/>
</dbReference>
<dbReference type="GO" id="GO:0006412">
    <property type="term" value="P:translation"/>
    <property type="evidence" value="ECO:0007669"/>
    <property type="project" value="UniProtKB-UniRule"/>
</dbReference>
<dbReference type="FunFam" id="3.40.1370.10:FF:000001">
    <property type="entry name" value="50S ribosomal protein L4"/>
    <property type="match status" value="1"/>
</dbReference>
<dbReference type="Gene3D" id="3.40.1370.10">
    <property type="match status" value="1"/>
</dbReference>
<dbReference type="HAMAP" id="MF_01328_B">
    <property type="entry name" value="Ribosomal_uL4_B"/>
    <property type="match status" value="1"/>
</dbReference>
<dbReference type="InterPro" id="IPR002136">
    <property type="entry name" value="Ribosomal_uL4"/>
</dbReference>
<dbReference type="InterPro" id="IPR013005">
    <property type="entry name" value="Ribosomal_uL4-like"/>
</dbReference>
<dbReference type="InterPro" id="IPR023574">
    <property type="entry name" value="Ribosomal_uL4_dom_sf"/>
</dbReference>
<dbReference type="NCBIfam" id="TIGR03953">
    <property type="entry name" value="rplD_bact"/>
    <property type="match status" value="1"/>
</dbReference>
<dbReference type="PANTHER" id="PTHR10746">
    <property type="entry name" value="50S RIBOSOMAL PROTEIN L4"/>
    <property type="match status" value="1"/>
</dbReference>
<dbReference type="PANTHER" id="PTHR10746:SF6">
    <property type="entry name" value="LARGE RIBOSOMAL SUBUNIT PROTEIN UL4M"/>
    <property type="match status" value="1"/>
</dbReference>
<dbReference type="Pfam" id="PF00573">
    <property type="entry name" value="Ribosomal_L4"/>
    <property type="match status" value="1"/>
</dbReference>
<dbReference type="SUPFAM" id="SSF52166">
    <property type="entry name" value="Ribosomal protein L4"/>
    <property type="match status" value="1"/>
</dbReference>
<accession>B8D9U6</accession>
<feature type="chain" id="PRO_1000165992" description="Large ribosomal subunit protein uL4">
    <location>
        <begin position="1"/>
        <end position="201"/>
    </location>
</feature>
<feature type="region of interest" description="Disordered" evidence="2">
    <location>
        <begin position="44"/>
        <end position="68"/>
    </location>
</feature>
<keyword id="KW-0687">Ribonucleoprotein</keyword>
<keyword id="KW-0689">Ribosomal protein</keyword>
<keyword id="KW-0694">RNA-binding</keyword>
<keyword id="KW-0699">rRNA-binding</keyword>
<name>RL4_BUCA5</name>
<proteinExistence type="inferred from homology"/>
<comment type="function">
    <text evidence="1">One of the primary rRNA binding proteins, this protein initially binds near the 5'-end of the 23S rRNA. It is important during the early stages of 50S assembly. It makes multiple contacts with different domains of the 23S rRNA in the assembled 50S subunit and ribosome.</text>
</comment>
<comment type="function">
    <text evidence="1">Forms part of the polypeptide exit tunnel.</text>
</comment>
<comment type="subunit">
    <text evidence="1">Part of the 50S ribosomal subunit.</text>
</comment>
<comment type="similarity">
    <text evidence="1">Belongs to the universal ribosomal protein uL4 family.</text>
</comment>